<comment type="function">
    <text evidence="1">Prenyltransferase that catalyzes the transfer of the geranylgeranyl moiety of geranylgeranyl diphosphate (GGPP) to the C3 hydroxyl of sn-glycerol-1-phosphate (G1P). This reaction is the first ether-bond-formation step in the biosynthesis of archaeal membrane lipids.</text>
</comment>
<comment type="catalytic activity">
    <reaction evidence="1">
        <text>sn-glycerol 1-phosphate + (2E,6E,10E)-geranylgeranyl diphosphate = sn-3-O-(geranylgeranyl)glycerol 1-phosphate + diphosphate</text>
        <dbReference type="Rhea" id="RHEA:23404"/>
        <dbReference type="ChEBI" id="CHEBI:33019"/>
        <dbReference type="ChEBI" id="CHEBI:57677"/>
        <dbReference type="ChEBI" id="CHEBI:57685"/>
        <dbReference type="ChEBI" id="CHEBI:58756"/>
        <dbReference type="EC" id="2.5.1.41"/>
    </reaction>
</comment>
<comment type="cofactor">
    <cofactor evidence="1">
        <name>Mg(2+)</name>
        <dbReference type="ChEBI" id="CHEBI:18420"/>
    </cofactor>
</comment>
<comment type="pathway">
    <text evidence="1">Membrane lipid metabolism; glycerophospholipid metabolism.</text>
</comment>
<comment type="subcellular location">
    <subcellularLocation>
        <location evidence="1">Cytoplasm</location>
    </subcellularLocation>
</comment>
<comment type="similarity">
    <text evidence="1">Belongs to the GGGP/HepGP synthase family. Group II subfamily.</text>
</comment>
<gene>
    <name type="ordered locus">YN1551_0965</name>
</gene>
<accession>C3NFV6</accession>
<evidence type="ECO:0000255" key="1">
    <source>
        <dbReference type="HAMAP-Rule" id="MF_00112"/>
    </source>
</evidence>
<dbReference type="EC" id="2.5.1.41" evidence="1"/>
<dbReference type="EMBL" id="CP001404">
    <property type="protein sequence ID" value="ACP48074.1"/>
    <property type="molecule type" value="Genomic_DNA"/>
</dbReference>
<dbReference type="RefSeq" id="WP_012714014.1">
    <property type="nucleotide sequence ID" value="NC_012623.1"/>
</dbReference>
<dbReference type="SMR" id="C3NFV6"/>
<dbReference type="KEGG" id="sin:YN1551_0965"/>
<dbReference type="HOGENOM" id="CLU_068610_0_0_2"/>
<dbReference type="UniPathway" id="UPA00940"/>
<dbReference type="Proteomes" id="UP000006818">
    <property type="component" value="Chromosome"/>
</dbReference>
<dbReference type="GO" id="GO:0005737">
    <property type="term" value="C:cytoplasm"/>
    <property type="evidence" value="ECO:0007669"/>
    <property type="project" value="UniProtKB-SubCell"/>
</dbReference>
<dbReference type="GO" id="GO:0000287">
    <property type="term" value="F:magnesium ion binding"/>
    <property type="evidence" value="ECO:0007669"/>
    <property type="project" value="UniProtKB-UniRule"/>
</dbReference>
<dbReference type="GO" id="GO:0047294">
    <property type="term" value="F:phosphoglycerol geranylgeranyltransferase activity"/>
    <property type="evidence" value="ECO:0007669"/>
    <property type="project" value="UniProtKB-UniRule"/>
</dbReference>
<dbReference type="GO" id="GO:0046474">
    <property type="term" value="P:glycerophospholipid biosynthetic process"/>
    <property type="evidence" value="ECO:0007669"/>
    <property type="project" value="UniProtKB-UniRule"/>
</dbReference>
<dbReference type="CDD" id="cd02812">
    <property type="entry name" value="PcrB_like"/>
    <property type="match status" value="1"/>
</dbReference>
<dbReference type="FunFam" id="3.20.20.390:FF:000001">
    <property type="entry name" value="Heptaprenylglyceryl phosphate synthase"/>
    <property type="match status" value="1"/>
</dbReference>
<dbReference type="Gene3D" id="3.20.20.390">
    <property type="entry name" value="FMN-linked oxidoreductases"/>
    <property type="match status" value="1"/>
</dbReference>
<dbReference type="HAMAP" id="MF_00112">
    <property type="entry name" value="GGGP_HepGP_synthase"/>
    <property type="match status" value="1"/>
</dbReference>
<dbReference type="InterPro" id="IPR039074">
    <property type="entry name" value="GGGP/HepGP_synthase_I"/>
</dbReference>
<dbReference type="InterPro" id="IPR038597">
    <property type="entry name" value="GGGP/HepGP_synthase_sf"/>
</dbReference>
<dbReference type="InterPro" id="IPR008205">
    <property type="entry name" value="GGGP_HepGP_synthase"/>
</dbReference>
<dbReference type="InterPro" id="IPR010946">
    <property type="entry name" value="GGGP_synth"/>
</dbReference>
<dbReference type="NCBIfam" id="TIGR01769">
    <property type="entry name" value="GGGP"/>
    <property type="match status" value="1"/>
</dbReference>
<dbReference type="NCBIfam" id="TIGR01768">
    <property type="entry name" value="GGGP-family"/>
    <property type="match status" value="1"/>
</dbReference>
<dbReference type="NCBIfam" id="NF003198">
    <property type="entry name" value="PRK04169.1-2"/>
    <property type="match status" value="1"/>
</dbReference>
<dbReference type="NCBIfam" id="NF003202">
    <property type="entry name" value="PRK04169.1-6"/>
    <property type="match status" value="1"/>
</dbReference>
<dbReference type="PANTHER" id="PTHR40029">
    <property type="match status" value="1"/>
</dbReference>
<dbReference type="PANTHER" id="PTHR40029:SF2">
    <property type="entry name" value="HEPTAPRENYLGLYCERYL PHOSPHATE SYNTHASE"/>
    <property type="match status" value="1"/>
</dbReference>
<dbReference type="Pfam" id="PF01884">
    <property type="entry name" value="PcrB"/>
    <property type="match status" value="1"/>
</dbReference>
<dbReference type="SUPFAM" id="SSF51395">
    <property type="entry name" value="FMN-linked oxidoreductases"/>
    <property type="match status" value="1"/>
</dbReference>
<organism>
    <name type="scientific">Saccharolobus islandicus (strain Y.N.15.51 / Yellowstone #2)</name>
    <name type="common">Sulfolobus islandicus</name>
    <dbReference type="NCBI Taxonomy" id="419942"/>
    <lineage>
        <taxon>Archaea</taxon>
        <taxon>Thermoproteota</taxon>
        <taxon>Thermoprotei</taxon>
        <taxon>Sulfolobales</taxon>
        <taxon>Sulfolobaceae</taxon>
        <taxon>Saccharolobus</taxon>
    </lineage>
</organism>
<protein>
    <recommendedName>
        <fullName evidence="1">Geranylgeranylglyceryl phosphate synthase</fullName>
        <shortName evidence="1">GGGP synthase</shortName>
        <shortName evidence="1">GGGPS</shortName>
        <ecNumber evidence="1">2.5.1.41</ecNumber>
    </recommendedName>
    <alternativeName>
        <fullName evidence="1">(S)-3-O-geranylgeranylglyceryl phosphate synthase</fullName>
    </alternativeName>
    <alternativeName>
        <fullName evidence="1">Phosphoglycerol geranylgeranyltransferase</fullName>
    </alternativeName>
</protein>
<keyword id="KW-0963">Cytoplasm</keyword>
<keyword id="KW-0444">Lipid biosynthesis</keyword>
<keyword id="KW-0443">Lipid metabolism</keyword>
<keyword id="KW-0460">Magnesium</keyword>
<keyword id="KW-0479">Metal-binding</keyword>
<keyword id="KW-0594">Phospholipid biosynthesis</keyword>
<keyword id="KW-1208">Phospholipid metabolism</keyword>
<keyword id="KW-0808">Transferase</keyword>
<name>GGGPS_SACI1</name>
<sequence>MKIRKKKMKLKGKVKKYLMDKLNDNEKLHFSLLDPFKINSSEELKYIAKNLYNVGTDAFLIGGTLGVSKDKLDFVISLLDDYEIPKIIFPSNINLLSEKADALLFLSLLNSDDIYYVIGAQIVAAPIIKMLQMEVIPTAYVIVGHGGTAAHIGKARVIPYDNFELATAYTLAAEYLGMDFVYLEAGSGAPEPIRPEMISFIKKASSIPLIIGGGIRSVEVALKLVEAGANIIVTGNIIERDVDKAIKIIRGIKNK</sequence>
<reference key="1">
    <citation type="journal article" date="2009" name="Proc. Natl. Acad. Sci. U.S.A.">
        <title>Biogeography of the Sulfolobus islandicus pan-genome.</title>
        <authorList>
            <person name="Reno M.L."/>
            <person name="Held N.L."/>
            <person name="Fields C.J."/>
            <person name="Burke P.V."/>
            <person name="Whitaker R.J."/>
        </authorList>
    </citation>
    <scope>NUCLEOTIDE SEQUENCE [LARGE SCALE GENOMIC DNA]</scope>
    <source>
        <strain>Y.N.15.51 / Yellowstone #2</strain>
    </source>
</reference>
<feature type="chain" id="PRO_1000202945" description="Geranylgeranylglyceryl phosphate synthase">
    <location>
        <begin position="1"/>
        <end position="255"/>
    </location>
</feature>
<feature type="binding site" evidence="1">
    <location>
        <position position="34"/>
    </location>
    <ligand>
        <name>Mg(2+)</name>
        <dbReference type="ChEBI" id="CHEBI:18420"/>
    </ligand>
</feature>
<feature type="binding site" evidence="1">
    <location>
        <position position="64"/>
    </location>
    <ligand>
        <name>Mg(2+)</name>
        <dbReference type="ChEBI" id="CHEBI:18420"/>
    </ligand>
</feature>
<feature type="binding site" evidence="1">
    <location>
        <begin position="182"/>
        <end position="188"/>
    </location>
    <ligand>
        <name>sn-glycerol 1-phosphate</name>
        <dbReference type="ChEBI" id="CHEBI:57685"/>
    </ligand>
</feature>
<feature type="binding site" evidence="1">
    <location>
        <begin position="213"/>
        <end position="214"/>
    </location>
    <ligand>
        <name>sn-glycerol 1-phosphate</name>
        <dbReference type="ChEBI" id="CHEBI:57685"/>
    </ligand>
</feature>
<feature type="binding site" evidence="1">
    <location>
        <begin position="235"/>
        <end position="236"/>
    </location>
    <ligand>
        <name>sn-glycerol 1-phosphate</name>
        <dbReference type="ChEBI" id="CHEBI:57685"/>
    </ligand>
</feature>
<proteinExistence type="inferred from homology"/>